<keyword id="KW-1185">Reference proteome</keyword>
<keyword id="KW-0687">Ribonucleoprotein</keyword>
<keyword id="KW-0689">Ribosomal protein</keyword>
<keyword id="KW-0694">RNA-binding</keyword>
<keyword id="KW-0699">rRNA-binding</keyword>
<protein>
    <recommendedName>
        <fullName evidence="1">Small ribosomal subunit protein uS8</fullName>
    </recommendedName>
    <alternativeName>
        <fullName evidence="2">30S ribosomal protein S8</fullName>
    </alternativeName>
</protein>
<gene>
    <name evidence="1" type="primary">rpsH</name>
    <name type="ordered locus">Ssed_4303</name>
</gene>
<evidence type="ECO:0000255" key="1">
    <source>
        <dbReference type="HAMAP-Rule" id="MF_01302"/>
    </source>
</evidence>
<evidence type="ECO:0000305" key="2"/>
<name>RS8_SHESH</name>
<sequence length="130" mass="14136">MSMQDPIADMLTRIRNGQAANKVSVSMPSAKLKVAIAKTLKEEGYITDYAVADETKPVLEITLKYFQGQPVVETIQRVSRPGLRIYKSKDELPKVMGGLGVAIVSTSKGLMTDRTARQNGMGGEVICYVA</sequence>
<organism>
    <name type="scientific">Shewanella sediminis (strain HAW-EB3)</name>
    <dbReference type="NCBI Taxonomy" id="425104"/>
    <lineage>
        <taxon>Bacteria</taxon>
        <taxon>Pseudomonadati</taxon>
        <taxon>Pseudomonadota</taxon>
        <taxon>Gammaproteobacteria</taxon>
        <taxon>Alteromonadales</taxon>
        <taxon>Shewanellaceae</taxon>
        <taxon>Shewanella</taxon>
    </lineage>
</organism>
<reference key="1">
    <citation type="submission" date="2007-08" db="EMBL/GenBank/DDBJ databases">
        <title>Complete sequence of Shewanella sediminis HAW-EB3.</title>
        <authorList>
            <consortium name="US DOE Joint Genome Institute"/>
            <person name="Copeland A."/>
            <person name="Lucas S."/>
            <person name="Lapidus A."/>
            <person name="Barry K."/>
            <person name="Glavina del Rio T."/>
            <person name="Dalin E."/>
            <person name="Tice H."/>
            <person name="Pitluck S."/>
            <person name="Chertkov O."/>
            <person name="Brettin T."/>
            <person name="Bruce D."/>
            <person name="Detter J.C."/>
            <person name="Han C."/>
            <person name="Schmutz J."/>
            <person name="Larimer F."/>
            <person name="Land M."/>
            <person name="Hauser L."/>
            <person name="Kyrpides N."/>
            <person name="Kim E."/>
            <person name="Zhao J.-S."/>
            <person name="Richardson P."/>
        </authorList>
    </citation>
    <scope>NUCLEOTIDE SEQUENCE [LARGE SCALE GENOMIC DNA]</scope>
    <source>
        <strain>HAW-EB3</strain>
    </source>
</reference>
<dbReference type="EMBL" id="CP000821">
    <property type="protein sequence ID" value="ABV38907.1"/>
    <property type="molecule type" value="Genomic_DNA"/>
</dbReference>
<dbReference type="RefSeq" id="WP_012144636.1">
    <property type="nucleotide sequence ID" value="NC_009831.1"/>
</dbReference>
<dbReference type="SMR" id="A8G1D4"/>
<dbReference type="STRING" id="425104.Ssed_4303"/>
<dbReference type="KEGG" id="sse:Ssed_4303"/>
<dbReference type="eggNOG" id="COG0096">
    <property type="taxonomic scope" value="Bacteria"/>
</dbReference>
<dbReference type="HOGENOM" id="CLU_098428_0_0_6"/>
<dbReference type="OrthoDB" id="9802617at2"/>
<dbReference type="Proteomes" id="UP000002015">
    <property type="component" value="Chromosome"/>
</dbReference>
<dbReference type="GO" id="GO:1990904">
    <property type="term" value="C:ribonucleoprotein complex"/>
    <property type="evidence" value="ECO:0007669"/>
    <property type="project" value="UniProtKB-KW"/>
</dbReference>
<dbReference type="GO" id="GO:0005840">
    <property type="term" value="C:ribosome"/>
    <property type="evidence" value="ECO:0007669"/>
    <property type="project" value="UniProtKB-KW"/>
</dbReference>
<dbReference type="GO" id="GO:0019843">
    <property type="term" value="F:rRNA binding"/>
    <property type="evidence" value="ECO:0007669"/>
    <property type="project" value="UniProtKB-UniRule"/>
</dbReference>
<dbReference type="GO" id="GO:0003735">
    <property type="term" value="F:structural constituent of ribosome"/>
    <property type="evidence" value="ECO:0007669"/>
    <property type="project" value="InterPro"/>
</dbReference>
<dbReference type="GO" id="GO:0006412">
    <property type="term" value="P:translation"/>
    <property type="evidence" value="ECO:0007669"/>
    <property type="project" value="UniProtKB-UniRule"/>
</dbReference>
<dbReference type="FunFam" id="3.30.1370.30:FF:000003">
    <property type="entry name" value="30S ribosomal protein S8"/>
    <property type="match status" value="1"/>
</dbReference>
<dbReference type="FunFam" id="3.30.1490.10:FF:000001">
    <property type="entry name" value="30S ribosomal protein S8"/>
    <property type="match status" value="1"/>
</dbReference>
<dbReference type="Gene3D" id="3.30.1370.30">
    <property type="match status" value="1"/>
</dbReference>
<dbReference type="Gene3D" id="3.30.1490.10">
    <property type="match status" value="1"/>
</dbReference>
<dbReference type="HAMAP" id="MF_01302_B">
    <property type="entry name" value="Ribosomal_uS8_B"/>
    <property type="match status" value="1"/>
</dbReference>
<dbReference type="InterPro" id="IPR000630">
    <property type="entry name" value="Ribosomal_uS8"/>
</dbReference>
<dbReference type="InterPro" id="IPR047863">
    <property type="entry name" value="Ribosomal_uS8_CS"/>
</dbReference>
<dbReference type="InterPro" id="IPR035987">
    <property type="entry name" value="Ribosomal_uS8_sf"/>
</dbReference>
<dbReference type="NCBIfam" id="NF001109">
    <property type="entry name" value="PRK00136.1"/>
    <property type="match status" value="1"/>
</dbReference>
<dbReference type="PANTHER" id="PTHR11758">
    <property type="entry name" value="40S RIBOSOMAL PROTEIN S15A"/>
    <property type="match status" value="1"/>
</dbReference>
<dbReference type="Pfam" id="PF00410">
    <property type="entry name" value="Ribosomal_S8"/>
    <property type="match status" value="1"/>
</dbReference>
<dbReference type="SUPFAM" id="SSF56047">
    <property type="entry name" value="Ribosomal protein S8"/>
    <property type="match status" value="1"/>
</dbReference>
<dbReference type="PROSITE" id="PS00053">
    <property type="entry name" value="RIBOSOMAL_S8"/>
    <property type="match status" value="1"/>
</dbReference>
<proteinExistence type="inferred from homology"/>
<comment type="function">
    <text evidence="1">One of the primary rRNA binding proteins, it binds directly to 16S rRNA central domain where it helps coordinate assembly of the platform of the 30S subunit.</text>
</comment>
<comment type="subunit">
    <text evidence="1">Part of the 30S ribosomal subunit. Contacts proteins S5 and S12.</text>
</comment>
<comment type="similarity">
    <text evidence="1">Belongs to the universal ribosomal protein uS8 family.</text>
</comment>
<accession>A8G1D4</accession>
<feature type="chain" id="PRO_1000085946" description="Small ribosomal subunit protein uS8">
    <location>
        <begin position="1"/>
        <end position="130"/>
    </location>
</feature>